<comment type="function">
    <text evidence="1">Catalyzes the ferrous insertion into protoporphyrin IX.</text>
</comment>
<comment type="catalytic activity">
    <reaction evidence="1">
        <text>heme b + 2 H(+) = protoporphyrin IX + Fe(2+)</text>
        <dbReference type="Rhea" id="RHEA:22584"/>
        <dbReference type="ChEBI" id="CHEBI:15378"/>
        <dbReference type="ChEBI" id="CHEBI:29033"/>
        <dbReference type="ChEBI" id="CHEBI:57306"/>
        <dbReference type="ChEBI" id="CHEBI:60344"/>
        <dbReference type="EC" id="4.98.1.1"/>
    </reaction>
</comment>
<comment type="pathway">
    <text evidence="1">Porphyrin-containing compound metabolism; protoheme biosynthesis; protoheme from protoporphyrin-IX: step 1/1.</text>
</comment>
<comment type="subcellular location">
    <subcellularLocation>
        <location evidence="1">Cytoplasm</location>
    </subcellularLocation>
</comment>
<comment type="similarity">
    <text evidence="1">Belongs to the ferrochelatase family.</text>
</comment>
<comment type="sequence caution" evidence="2">
    <conflict type="erroneous initiation">
        <sequence resource="EMBL-CDS" id="CAG19436"/>
    </conflict>
</comment>
<dbReference type="EC" id="4.98.1.1" evidence="1"/>
<dbReference type="EMBL" id="CR378666">
    <property type="protein sequence ID" value="CAG19436.1"/>
    <property type="status" value="ALT_INIT"/>
    <property type="molecule type" value="Genomic_DNA"/>
</dbReference>
<dbReference type="RefSeq" id="WP_041394669.1">
    <property type="nucleotide sequence ID" value="NC_006370.1"/>
</dbReference>
<dbReference type="SMR" id="Q6LTE0"/>
<dbReference type="STRING" id="298386.PBPRA1025"/>
<dbReference type="KEGG" id="ppr:PBPRA1025"/>
<dbReference type="eggNOG" id="COG0276">
    <property type="taxonomic scope" value="Bacteria"/>
</dbReference>
<dbReference type="HOGENOM" id="CLU_018884_0_0_6"/>
<dbReference type="UniPathway" id="UPA00252">
    <property type="reaction ID" value="UER00325"/>
</dbReference>
<dbReference type="Proteomes" id="UP000000593">
    <property type="component" value="Chromosome 1"/>
</dbReference>
<dbReference type="GO" id="GO:0005737">
    <property type="term" value="C:cytoplasm"/>
    <property type="evidence" value="ECO:0007669"/>
    <property type="project" value="UniProtKB-SubCell"/>
</dbReference>
<dbReference type="GO" id="GO:0004325">
    <property type="term" value="F:ferrochelatase activity"/>
    <property type="evidence" value="ECO:0007669"/>
    <property type="project" value="UniProtKB-UniRule"/>
</dbReference>
<dbReference type="GO" id="GO:0046872">
    <property type="term" value="F:metal ion binding"/>
    <property type="evidence" value="ECO:0007669"/>
    <property type="project" value="UniProtKB-KW"/>
</dbReference>
<dbReference type="GO" id="GO:0006783">
    <property type="term" value="P:heme biosynthetic process"/>
    <property type="evidence" value="ECO:0007669"/>
    <property type="project" value="UniProtKB-UniRule"/>
</dbReference>
<dbReference type="CDD" id="cd00419">
    <property type="entry name" value="Ferrochelatase_C"/>
    <property type="match status" value="1"/>
</dbReference>
<dbReference type="CDD" id="cd03411">
    <property type="entry name" value="Ferrochelatase_N"/>
    <property type="match status" value="1"/>
</dbReference>
<dbReference type="FunFam" id="3.40.50.1400:FF:000002">
    <property type="entry name" value="Ferrochelatase"/>
    <property type="match status" value="1"/>
</dbReference>
<dbReference type="Gene3D" id="3.40.50.1400">
    <property type="match status" value="2"/>
</dbReference>
<dbReference type="HAMAP" id="MF_00323">
    <property type="entry name" value="Ferrochelatase"/>
    <property type="match status" value="1"/>
</dbReference>
<dbReference type="InterPro" id="IPR001015">
    <property type="entry name" value="Ferrochelatase"/>
</dbReference>
<dbReference type="InterPro" id="IPR019772">
    <property type="entry name" value="Ferrochelatase_AS"/>
</dbReference>
<dbReference type="InterPro" id="IPR033644">
    <property type="entry name" value="Ferrochelatase_C"/>
</dbReference>
<dbReference type="InterPro" id="IPR033659">
    <property type="entry name" value="Ferrochelatase_N"/>
</dbReference>
<dbReference type="NCBIfam" id="TIGR00109">
    <property type="entry name" value="hemH"/>
    <property type="match status" value="1"/>
</dbReference>
<dbReference type="PANTHER" id="PTHR11108">
    <property type="entry name" value="FERROCHELATASE"/>
    <property type="match status" value="1"/>
</dbReference>
<dbReference type="PANTHER" id="PTHR11108:SF1">
    <property type="entry name" value="FERROCHELATASE, MITOCHONDRIAL"/>
    <property type="match status" value="1"/>
</dbReference>
<dbReference type="Pfam" id="PF00762">
    <property type="entry name" value="Ferrochelatase"/>
    <property type="match status" value="1"/>
</dbReference>
<dbReference type="SUPFAM" id="SSF53800">
    <property type="entry name" value="Chelatase"/>
    <property type="match status" value="1"/>
</dbReference>
<dbReference type="PROSITE" id="PS00534">
    <property type="entry name" value="FERROCHELATASE"/>
    <property type="match status" value="1"/>
</dbReference>
<evidence type="ECO:0000255" key="1">
    <source>
        <dbReference type="HAMAP-Rule" id="MF_00323"/>
    </source>
</evidence>
<evidence type="ECO:0000305" key="2"/>
<gene>
    <name evidence="1" type="primary">hemH</name>
    <name type="ordered locus">PBPRA1025</name>
</gene>
<sequence length="322" mass="36662">MKNNNYGVLLVNLGTPDEASPAAIKRFLSEFLHDKRVVDMTRWLWCPILHGVILPIRSPKVAKLYQSVWMEDGSPLMVYSQRQRQALEKQLNVPVALGMTYGTPSIATGLAELKQQGCNKVLVLPLYPQYSGTTTAAVFDRIAKELKQQPHIPELRFINHYFDHPDYIDALALSVTDFWAENGEPDYLLCSYHGIPKRYADNGDPYPQHCHATTEKLAERLAMPREKMSMSYQSIFGREEWLQPYTEVTIEALAQKGIKRLDVMCPAFSVDCLETLEEIAEQCKETFIKAGGDVFNLIPCLNDNEAHIRMMKNLVTQHSQGW</sequence>
<keyword id="KW-0963">Cytoplasm</keyword>
<keyword id="KW-0350">Heme biosynthesis</keyword>
<keyword id="KW-0408">Iron</keyword>
<keyword id="KW-0456">Lyase</keyword>
<keyword id="KW-0479">Metal-binding</keyword>
<keyword id="KW-0627">Porphyrin biosynthesis</keyword>
<keyword id="KW-1185">Reference proteome</keyword>
<protein>
    <recommendedName>
        <fullName evidence="1">Ferrochelatase</fullName>
        <ecNumber evidence="1">4.98.1.1</ecNumber>
    </recommendedName>
    <alternativeName>
        <fullName evidence="1">Heme synthase</fullName>
    </alternativeName>
    <alternativeName>
        <fullName evidence="1">Protoheme ferro-lyase</fullName>
    </alternativeName>
</protein>
<proteinExistence type="inferred from homology"/>
<accession>Q6LTE0</accession>
<feature type="chain" id="PRO_0000175177" description="Ferrochelatase">
    <location>
        <begin position="1"/>
        <end position="322"/>
    </location>
</feature>
<feature type="binding site" evidence="1">
    <location>
        <position position="193"/>
    </location>
    <ligand>
        <name>Fe cation</name>
        <dbReference type="ChEBI" id="CHEBI:24875"/>
    </ligand>
</feature>
<feature type="binding site" evidence="1">
    <location>
        <position position="274"/>
    </location>
    <ligand>
        <name>Fe cation</name>
        <dbReference type="ChEBI" id="CHEBI:24875"/>
    </ligand>
</feature>
<name>HEMH_PHOPR</name>
<reference key="1">
    <citation type="journal article" date="2005" name="Science">
        <title>Life at depth: Photobacterium profundum genome sequence and expression analysis.</title>
        <authorList>
            <person name="Vezzi A."/>
            <person name="Campanaro S."/>
            <person name="D'Angelo M."/>
            <person name="Simonato F."/>
            <person name="Vitulo N."/>
            <person name="Lauro F.M."/>
            <person name="Cestaro A."/>
            <person name="Malacrida G."/>
            <person name="Simionati B."/>
            <person name="Cannata N."/>
            <person name="Romualdi C."/>
            <person name="Bartlett D.H."/>
            <person name="Valle G."/>
        </authorList>
    </citation>
    <scope>NUCLEOTIDE SEQUENCE [LARGE SCALE GENOMIC DNA]</scope>
    <source>
        <strain>ATCC BAA-1253 / SS9</strain>
    </source>
</reference>
<organism>
    <name type="scientific">Photobacterium profundum (strain SS9)</name>
    <dbReference type="NCBI Taxonomy" id="298386"/>
    <lineage>
        <taxon>Bacteria</taxon>
        <taxon>Pseudomonadati</taxon>
        <taxon>Pseudomonadota</taxon>
        <taxon>Gammaproteobacteria</taxon>
        <taxon>Vibrionales</taxon>
        <taxon>Vibrionaceae</taxon>
        <taxon>Photobacterium</taxon>
    </lineage>
</organism>